<accession>P29019</accession>
<reference key="1">
    <citation type="journal article" date="1991" name="J. Gen. Microbiol.">
        <title>Molecular cloning and nucleotide sequence of the gene encoding an endo-1,4-beta-glucanase from Bacillus sp. KSM-330.</title>
        <authorList>
            <person name="Ozaki K."/>
            <person name="Sumitomo N."/>
            <person name="Ito S."/>
        </authorList>
    </citation>
    <scope>NUCLEOTIDE SEQUENCE [GENOMIC DNA]</scope>
</reference>
<reference key="2">
    <citation type="journal article" date="1991" name="J. Gen. Microbiol.">
        <title>Purification and properties of an acid endo-1,4-beta-glucanase from Bacillus sp. KSM-330.</title>
        <authorList>
            <person name="Ozaki K."/>
            <person name="Ito S."/>
        </authorList>
    </citation>
    <scope>PROTEIN SEQUENCE OF 56-75</scope>
    <scope>CHARACTERIZATION</scope>
</reference>
<protein>
    <recommendedName>
        <fullName>Endoglucanase</fullName>
        <ecNumber>3.2.1.4</ecNumber>
    </recommendedName>
    <alternativeName>
        <fullName>Cellulase</fullName>
    </alternativeName>
    <alternativeName>
        <fullName>Endo-1,4-beta-glucanase</fullName>
    </alternativeName>
    <alternativeName>
        <fullName>Endo-K</fullName>
    </alternativeName>
</protein>
<comment type="catalytic activity">
    <reaction>
        <text>Endohydrolysis of (1-&gt;4)-beta-D-glucosidic linkages in cellulose, lichenin and cereal beta-D-glucans.</text>
        <dbReference type="EC" id="3.2.1.4"/>
    </reaction>
</comment>
<comment type="biophysicochemical properties">
    <phDependence>
        <text>Optimum pH is 5.2. Active from pH 4.5 to 6.5.</text>
    </phDependence>
</comment>
<comment type="PTM">
    <text>The N- and the C-terminus may be subjected to proteolysis.</text>
</comment>
<comment type="miscellaneous">
    <text>One Trp residue has been proved to be involved in the mechanism of action of endo-K.</text>
</comment>
<comment type="similarity">
    <text evidence="4">Belongs to the glycosyl hydrolase 8 (cellulase D) family.</text>
</comment>
<dbReference type="EC" id="3.2.1.4"/>
<dbReference type="EMBL" id="M68872">
    <property type="protein sequence ID" value="AAA22409.1"/>
    <property type="molecule type" value="Genomic_DNA"/>
</dbReference>
<dbReference type="PIR" id="A44808">
    <property type="entry name" value="A44808"/>
</dbReference>
<dbReference type="SMR" id="P29019"/>
<dbReference type="CAZy" id="GH8">
    <property type="family name" value="Glycoside Hydrolase Family 8"/>
</dbReference>
<dbReference type="SABIO-RK" id="P29019"/>
<dbReference type="GO" id="GO:0008810">
    <property type="term" value="F:cellulase activity"/>
    <property type="evidence" value="ECO:0007669"/>
    <property type="project" value="UniProtKB-EC"/>
</dbReference>
<dbReference type="GO" id="GO:0030245">
    <property type="term" value="P:cellulose catabolic process"/>
    <property type="evidence" value="ECO:0007669"/>
    <property type="project" value="UniProtKB-KW"/>
</dbReference>
<dbReference type="Gene3D" id="1.50.10.10">
    <property type="match status" value="1"/>
</dbReference>
<dbReference type="InterPro" id="IPR008928">
    <property type="entry name" value="6-hairpin_glycosidase_sf"/>
</dbReference>
<dbReference type="InterPro" id="IPR012341">
    <property type="entry name" value="6hp_glycosidase-like_sf"/>
</dbReference>
<dbReference type="InterPro" id="IPR002037">
    <property type="entry name" value="Glyco_hydro_8"/>
</dbReference>
<dbReference type="InterPro" id="IPR019834">
    <property type="entry name" value="Glyco_hydro_8_CS"/>
</dbReference>
<dbReference type="Pfam" id="PF01270">
    <property type="entry name" value="Glyco_hydro_8"/>
    <property type="match status" value="1"/>
</dbReference>
<dbReference type="PRINTS" id="PR00735">
    <property type="entry name" value="GLHYDRLASE8"/>
</dbReference>
<dbReference type="SUPFAM" id="SSF48208">
    <property type="entry name" value="Six-hairpin glycosidases"/>
    <property type="match status" value="1"/>
</dbReference>
<dbReference type="PROSITE" id="PS00812">
    <property type="entry name" value="GLYCOSYL_HYDROL_F8"/>
    <property type="match status" value="1"/>
</dbReference>
<proteinExistence type="evidence at protein level"/>
<sequence length="463" mass="51883">MVEKRKIFTVLCACGIGFTSYTSCISAAAIDNDTLINNGHKINSSIITNSSQVSAVAKEMKPFPQQVNYSGILKPNHVSQESLNNAVKNYYNDWKKKYLKNDLSSLPGGYYVKGEITGNPDGFRPLGTSEGQGYGMIITVLMAGHDSNAQTIYDGLFKTARAFKSSINPNLMGWVVADDKKAQGHFDSATDGDLDIAYSLLLAHKQWGSSGKINYLKEAQNMITKGIKASNVTKNNGLNLGDWGDKSTFDTRPSDWMMSHLRAFYEFTGDKTWLNVIDNLYNTYTNFTNKYSPKTGLISDFVVKNPPQPAPKDFLDESKYTDSYYYNASRVPLRIVMDYAMYGEKRGKVISDKVATWIKSKTKGNPSKIVDGYKLDGTNIGDYPTAVYVSPFIAAGTTNSKNQEWVNSGWDWMKNKKESYFSDSYNLLTMLFLTGNWWKPIPDEKKIQSPINLEVQSELKEQD</sequence>
<name>GUN_BACSZ</name>
<keyword id="KW-0119">Carbohydrate metabolism</keyword>
<keyword id="KW-0136">Cellulose degradation</keyword>
<keyword id="KW-0903">Direct protein sequencing</keyword>
<keyword id="KW-0326">Glycosidase</keyword>
<keyword id="KW-0378">Hydrolase</keyword>
<keyword id="KW-0624">Polysaccharide degradation</keyword>
<keyword id="KW-0732">Signal</keyword>
<organism>
    <name type="scientific">Bacillus sp. (strain KSM-330)</name>
    <dbReference type="NCBI Taxonomy" id="72575"/>
    <lineage>
        <taxon>Bacteria</taxon>
        <taxon>Bacillati</taxon>
        <taxon>Bacillota</taxon>
        <taxon>Bacilli</taxon>
        <taxon>Bacillales</taxon>
        <taxon>Bacillaceae</taxon>
        <taxon>Bacillus</taxon>
    </lineage>
</organism>
<evidence type="ECO:0000250" key="1"/>
<evidence type="ECO:0000255" key="2"/>
<evidence type="ECO:0000255" key="3">
    <source>
        <dbReference type="PROSITE-ProRule" id="PRU10058"/>
    </source>
</evidence>
<evidence type="ECO:0000305" key="4"/>
<feature type="signal peptide" evidence="2">
    <location>
        <begin position="1"/>
        <end position="27"/>
    </location>
</feature>
<feature type="propeptide" id="PRO_0000007931" evidence="2">
    <location>
        <begin position="28"/>
        <end position="55"/>
    </location>
</feature>
<feature type="chain" id="PRO_0000007932" description="Endoglucanase">
    <location>
        <begin position="56"/>
        <end position="463"/>
    </location>
</feature>
<feature type="active site" description="Proton donor" evidence="1">
    <location>
        <position position="130"/>
    </location>
</feature>
<feature type="active site" description="Nucleophile" evidence="3">
    <location>
        <position position="191"/>
    </location>
</feature>